<name>RLMN_SHELP</name>
<comment type="function">
    <text evidence="1">Specifically methylates position 2 of adenine 2503 in 23S rRNA and position 2 of adenine 37 in tRNAs. m2A2503 modification seems to play a crucial role in the proofreading step occurring at the peptidyl transferase center and thus would serve to optimize ribosomal fidelity.</text>
</comment>
<comment type="catalytic activity">
    <reaction evidence="1">
        <text>adenosine(2503) in 23S rRNA + 2 reduced [2Fe-2S]-[ferredoxin] + 2 S-adenosyl-L-methionine = 2-methyladenosine(2503) in 23S rRNA + 5'-deoxyadenosine + L-methionine + 2 oxidized [2Fe-2S]-[ferredoxin] + S-adenosyl-L-homocysteine</text>
        <dbReference type="Rhea" id="RHEA:42916"/>
        <dbReference type="Rhea" id="RHEA-COMP:10000"/>
        <dbReference type="Rhea" id="RHEA-COMP:10001"/>
        <dbReference type="Rhea" id="RHEA-COMP:10152"/>
        <dbReference type="Rhea" id="RHEA-COMP:10282"/>
        <dbReference type="ChEBI" id="CHEBI:17319"/>
        <dbReference type="ChEBI" id="CHEBI:33737"/>
        <dbReference type="ChEBI" id="CHEBI:33738"/>
        <dbReference type="ChEBI" id="CHEBI:57844"/>
        <dbReference type="ChEBI" id="CHEBI:57856"/>
        <dbReference type="ChEBI" id="CHEBI:59789"/>
        <dbReference type="ChEBI" id="CHEBI:74411"/>
        <dbReference type="ChEBI" id="CHEBI:74497"/>
        <dbReference type="EC" id="2.1.1.192"/>
    </reaction>
</comment>
<comment type="catalytic activity">
    <reaction evidence="1">
        <text>adenosine(37) in tRNA + 2 reduced [2Fe-2S]-[ferredoxin] + 2 S-adenosyl-L-methionine = 2-methyladenosine(37) in tRNA + 5'-deoxyadenosine + L-methionine + 2 oxidized [2Fe-2S]-[ferredoxin] + S-adenosyl-L-homocysteine</text>
        <dbReference type="Rhea" id="RHEA:43332"/>
        <dbReference type="Rhea" id="RHEA-COMP:10000"/>
        <dbReference type="Rhea" id="RHEA-COMP:10001"/>
        <dbReference type="Rhea" id="RHEA-COMP:10162"/>
        <dbReference type="Rhea" id="RHEA-COMP:10485"/>
        <dbReference type="ChEBI" id="CHEBI:17319"/>
        <dbReference type="ChEBI" id="CHEBI:33737"/>
        <dbReference type="ChEBI" id="CHEBI:33738"/>
        <dbReference type="ChEBI" id="CHEBI:57844"/>
        <dbReference type="ChEBI" id="CHEBI:57856"/>
        <dbReference type="ChEBI" id="CHEBI:59789"/>
        <dbReference type="ChEBI" id="CHEBI:74411"/>
        <dbReference type="ChEBI" id="CHEBI:74497"/>
        <dbReference type="EC" id="2.1.1.192"/>
    </reaction>
</comment>
<comment type="cofactor">
    <cofactor evidence="1">
        <name>[4Fe-4S] cluster</name>
        <dbReference type="ChEBI" id="CHEBI:49883"/>
    </cofactor>
    <text evidence="1">Binds 1 [4Fe-4S] cluster. The cluster is coordinated with 3 cysteines and an exchangeable S-adenosyl-L-methionine.</text>
</comment>
<comment type="subcellular location">
    <subcellularLocation>
        <location evidence="1">Cytoplasm</location>
    </subcellularLocation>
</comment>
<comment type="miscellaneous">
    <text evidence="1">Reaction proceeds by a ping-pong mechanism involving intermediate methylation of a conserved cysteine residue.</text>
</comment>
<comment type="similarity">
    <text evidence="1">Belongs to the radical SAM superfamily. RlmN family.</text>
</comment>
<reference key="1">
    <citation type="submission" date="2007-03" db="EMBL/GenBank/DDBJ databases">
        <title>Complete sequence of Shewanella loihica PV-4.</title>
        <authorList>
            <consortium name="US DOE Joint Genome Institute"/>
            <person name="Copeland A."/>
            <person name="Lucas S."/>
            <person name="Lapidus A."/>
            <person name="Barry K."/>
            <person name="Detter J.C."/>
            <person name="Glavina del Rio T."/>
            <person name="Hammon N."/>
            <person name="Israni S."/>
            <person name="Dalin E."/>
            <person name="Tice H."/>
            <person name="Pitluck S."/>
            <person name="Chain P."/>
            <person name="Malfatti S."/>
            <person name="Shin M."/>
            <person name="Vergez L."/>
            <person name="Schmutz J."/>
            <person name="Larimer F."/>
            <person name="Land M."/>
            <person name="Hauser L."/>
            <person name="Kyrpides N."/>
            <person name="Mikhailova N."/>
            <person name="Romine M.F."/>
            <person name="Serres G."/>
            <person name="Fredrickson J."/>
            <person name="Tiedje J."/>
            <person name="Richardson P."/>
        </authorList>
    </citation>
    <scope>NUCLEOTIDE SEQUENCE [LARGE SCALE GENOMIC DNA]</scope>
    <source>
        <strain>ATCC BAA-1088 / PV-4</strain>
    </source>
</reference>
<keyword id="KW-0004">4Fe-4S</keyword>
<keyword id="KW-0963">Cytoplasm</keyword>
<keyword id="KW-1015">Disulfide bond</keyword>
<keyword id="KW-0408">Iron</keyword>
<keyword id="KW-0411">Iron-sulfur</keyword>
<keyword id="KW-0479">Metal-binding</keyword>
<keyword id="KW-0489">Methyltransferase</keyword>
<keyword id="KW-1185">Reference proteome</keyword>
<keyword id="KW-0698">rRNA processing</keyword>
<keyword id="KW-0949">S-adenosyl-L-methionine</keyword>
<keyword id="KW-0808">Transferase</keyword>
<keyword id="KW-0819">tRNA processing</keyword>
<gene>
    <name evidence="1" type="primary">rlmN</name>
    <name type="ordered locus">Shew_1287</name>
</gene>
<dbReference type="EC" id="2.1.1.192" evidence="1"/>
<dbReference type="EMBL" id="CP000606">
    <property type="protein sequence ID" value="ABO23157.1"/>
    <property type="molecule type" value="Genomic_DNA"/>
</dbReference>
<dbReference type="RefSeq" id="WP_011865089.1">
    <property type="nucleotide sequence ID" value="NC_009092.1"/>
</dbReference>
<dbReference type="SMR" id="A3QCF9"/>
<dbReference type="STRING" id="323850.Shew_1287"/>
<dbReference type="KEGG" id="slo:Shew_1287"/>
<dbReference type="eggNOG" id="COG0820">
    <property type="taxonomic scope" value="Bacteria"/>
</dbReference>
<dbReference type="HOGENOM" id="CLU_029101_0_0_6"/>
<dbReference type="OrthoDB" id="9793973at2"/>
<dbReference type="Proteomes" id="UP000001558">
    <property type="component" value="Chromosome"/>
</dbReference>
<dbReference type="GO" id="GO:0005737">
    <property type="term" value="C:cytoplasm"/>
    <property type="evidence" value="ECO:0007669"/>
    <property type="project" value="UniProtKB-SubCell"/>
</dbReference>
<dbReference type="GO" id="GO:0051539">
    <property type="term" value="F:4 iron, 4 sulfur cluster binding"/>
    <property type="evidence" value="ECO:0007669"/>
    <property type="project" value="UniProtKB-UniRule"/>
</dbReference>
<dbReference type="GO" id="GO:0046872">
    <property type="term" value="F:metal ion binding"/>
    <property type="evidence" value="ECO:0007669"/>
    <property type="project" value="UniProtKB-KW"/>
</dbReference>
<dbReference type="GO" id="GO:0070040">
    <property type="term" value="F:rRNA (adenine(2503)-C2-)-methyltransferase activity"/>
    <property type="evidence" value="ECO:0007669"/>
    <property type="project" value="UniProtKB-UniRule"/>
</dbReference>
<dbReference type="GO" id="GO:0019843">
    <property type="term" value="F:rRNA binding"/>
    <property type="evidence" value="ECO:0007669"/>
    <property type="project" value="UniProtKB-UniRule"/>
</dbReference>
<dbReference type="GO" id="GO:0002935">
    <property type="term" value="F:tRNA (adenine(37)-C2)-methyltransferase activity"/>
    <property type="evidence" value="ECO:0007669"/>
    <property type="project" value="UniProtKB-UniRule"/>
</dbReference>
<dbReference type="GO" id="GO:0000049">
    <property type="term" value="F:tRNA binding"/>
    <property type="evidence" value="ECO:0007669"/>
    <property type="project" value="UniProtKB-UniRule"/>
</dbReference>
<dbReference type="GO" id="GO:0070475">
    <property type="term" value="P:rRNA base methylation"/>
    <property type="evidence" value="ECO:0007669"/>
    <property type="project" value="UniProtKB-UniRule"/>
</dbReference>
<dbReference type="GO" id="GO:0030488">
    <property type="term" value="P:tRNA methylation"/>
    <property type="evidence" value="ECO:0007669"/>
    <property type="project" value="UniProtKB-UniRule"/>
</dbReference>
<dbReference type="CDD" id="cd01335">
    <property type="entry name" value="Radical_SAM"/>
    <property type="match status" value="1"/>
</dbReference>
<dbReference type="FunFam" id="1.10.150.530:FF:000003">
    <property type="entry name" value="Dual-specificity RNA methyltransferase RlmN"/>
    <property type="match status" value="1"/>
</dbReference>
<dbReference type="FunFam" id="3.20.20.70:FF:000008">
    <property type="entry name" value="Dual-specificity RNA methyltransferase RlmN"/>
    <property type="match status" value="1"/>
</dbReference>
<dbReference type="Gene3D" id="1.10.150.530">
    <property type="match status" value="1"/>
</dbReference>
<dbReference type="Gene3D" id="3.20.20.70">
    <property type="entry name" value="Aldolase class I"/>
    <property type="match status" value="1"/>
</dbReference>
<dbReference type="HAMAP" id="MF_01849">
    <property type="entry name" value="RNA_methyltr_RlmN"/>
    <property type="match status" value="1"/>
</dbReference>
<dbReference type="InterPro" id="IPR013785">
    <property type="entry name" value="Aldolase_TIM"/>
</dbReference>
<dbReference type="InterPro" id="IPR040072">
    <property type="entry name" value="Methyltransferase_A"/>
</dbReference>
<dbReference type="InterPro" id="IPR048641">
    <property type="entry name" value="RlmN_N"/>
</dbReference>
<dbReference type="InterPro" id="IPR027492">
    <property type="entry name" value="RNA_MTrfase_RlmN"/>
</dbReference>
<dbReference type="InterPro" id="IPR004383">
    <property type="entry name" value="rRNA_lsu_MTrfase_RlmN/Cfr"/>
</dbReference>
<dbReference type="InterPro" id="IPR007197">
    <property type="entry name" value="rSAM"/>
</dbReference>
<dbReference type="NCBIfam" id="NF008396">
    <property type="entry name" value="PRK11194.1"/>
    <property type="match status" value="1"/>
</dbReference>
<dbReference type="NCBIfam" id="TIGR00048">
    <property type="entry name" value="rRNA_mod_RlmN"/>
    <property type="match status" value="1"/>
</dbReference>
<dbReference type="PANTHER" id="PTHR30544">
    <property type="entry name" value="23S RRNA METHYLTRANSFERASE"/>
    <property type="match status" value="1"/>
</dbReference>
<dbReference type="PANTHER" id="PTHR30544:SF5">
    <property type="entry name" value="RADICAL SAM CORE DOMAIN-CONTAINING PROTEIN"/>
    <property type="match status" value="1"/>
</dbReference>
<dbReference type="Pfam" id="PF04055">
    <property type="entry name" value="Radical_SAM"/>
    <property type="match status" value="1"/>
</dbReference>
<dbReference type="Pfam" id="PF21016">
    <property type="entry name" value="RlmN_N"/>
    <property type="match status" value="1"/>
</dbReference>
<dbReference type="PIRSF" id="PIRSF006004">
    <property type="entry name" value="CHP00048"/>
    <property type="match status" value="1"/>
</dbReference>
<dbReference type="SFLD" id="SFLDF00275">
    <property type="entry name" value="adenosine_C2_methyltransferase"/>
    <property type="match status" value="1"/>
</dbReference>
<dbReference type="SFLD" id="SFLDS00029">
    <property type="entry name" value="Radical_SAM"/>
    <property type="match status" value="1"/>
</dbReference>
<dbReference type="SUPFAM" id="SSF102114">
    <property type="entry name" value="Radical SAM enzymes"/>
    <property type="match status" value="1"/>
</dbReference>
<dbReference type="PROSITE" id="PS51918">
    <property type="entry name" value="RADICAL_SAM"/>
    <property type="match status" value="1"/>
</dbReference>
<organism>
    <name type="scientific">Shewanella loihica (strain ATCC BAA-1088 / PV-4)</name>
    <dbReference type="NCBI Taxonomy" id="323850"/>
    <lineage>
        <taxon>Bacteria</taxon>
        <taxon>Pseudomonadati</taxon>
        <taxon>Pseudomonadota</taxon>
        <taxon>Gammaproteobacteria</taxon>
        <taxon>Alteromonadales</taxon>
        <taxon>Shewanellaceae</taxon>
        <taxon>Shewanella</taxon>
    </lineage>
</organism>
<sequence length="373" mass="41686">MSEKKINLLDLDRKGLRALFTEMGEKPFRADQLMKWLYHFGVSDFEQMTNINKVLRAKLAARCEVVAPEISSYQKSADGTIKFAINVGNGQEVETVYIPEEDRATLCVSSQVGCALECTFCSTAQQGFNRNLTVSEIVGQIWRVSHFLGFQKETGERPISNVVMMGMGEPLLNLKNVMPAIDIMLDDFGFSLSKRRVTVSTSGVVPALDILGDNLDVALAVSIHAPNDELRDVLVPVNKKYPLQEFLAAIRRYLAKSNANRGRVTLEYVMLDHINDSTDQAHELAELMKDTPCKINLIPFNPYPGSPYGRSSNSRIDRFSKVLMEYGLTVIVRKTRGDDIDAACGQLAGDIRDRTKRLAKKRMQDSQISVTIN</sequence>
<proteinExistence type="inferred from homology"/>
<protein>
    <recommendedName>
        <fullName evidence="1">Dual-specificity RNA methyltransferase RlmN</fullName>
        <ecNumber evidence="1">2.1.1.192</ecNumber>
    </recommendedName>
    <alternativeName>
        <fullName evidence="1">23S rRNA (adenine(2503)-C(2))-methyltransferase</fullName>
    </alternativeName>
    <alternativeName>
        <fullName evidence="1">23S rRNA m2A2503 methyltransferase</fullName>
    </alternativeName>
    <alternativeName>
        <fullName evidence="1">Ribosomal RNA large subunit methyltransferase N</fullName>
    </alternativeName>
    <alternativeName>
        <fullName evidence="1">tRNA (adenine(37)-C(2))-methyltransferase</fullName>
    </alternativeName>
    <alternativeName>
        <fullName evidence="1">tRNA m2A37 methyltransferase</fullName>
    </alternativeName>
</protein>
<evidence type="ECO:0000255" key="1">
    <source>
        <dbReference type="HAMAP-Rule" id="MF_01849"/>
    </source>
</evidence>
<evidence type="ECO:0000255" key="2">
    <source>
        <dbReference type="PROSITE-ProRule" id="PRU01266"/>
    </source>
</evidence>
<feature type="chain" id="PRO_0000350399" description="Dual-specificity RNA methyltransferase RlmN">
    <location>
        <begin position="1"/>
        <end position="373"/>
    </location>
</feature>
<feature type="domain" description="Radical SAM core" evidence="2">
    <location>
        <begin position="100"/>
        <end position="339"/>
    </location>
</feature>
<feature type="active site" description="Proton acceptor" evidence="1">
    <location>
        <position position="94"/>
    </location>
</feature>
<feature type="active site" description="S-methylcysteine intermediate" evidence="1">
    <location>
        <position position="344"/>
    </location>
</feature>
<feature type="binding site" evidence="1">
    <location>
        <position position="114"/>
    </location>
    <ligand>
        <name>[4Fe-4S] cluster</name>
        <dbReference type="ChEBI" id="CHEBI:49883"/>
        <note>4Fe-4S-S-AdoMet</note>
    </ligand>
</feature>
<feature type="binding site" evidence="1">
    <location>
        <position position="118"/>
    </location>
    <ligand>
        <name>[4Fe-4S] cluster</name>
        <dbReference type="ChEBI" id="CHEBI:49883"/>
        <note>4Fe-4S-S-AdoMet</note>
    </ligand>
</feature>
<feature type="binding site" evidence="1">
    <location>
        <position position="121"/>
    </location>
    <ligand>
        <name>[4Fe-4S] cluster</name>
        <dbReference type="ChEBI" id="CHEBI:49883"/>
        <note>4Fe-4S-S-AdoMet</note>
    </ligand>
</feature>
<feature type="binding site" evidence="1">
    <location>
        <begin position="168"/>
        <end position="169"/>
    </location>
    <ligand>
        <name>S-adenosyl-L-methionine</name>
        <dbReference type="ChEBI" id="CHEBI:59789"/>
    </ligand>
</feature>
<feature type="binding site" evidence="1">
    <location>
        <position position="200"/>
    </location>
    <ligand>
        <name>S-adenosyl-L-methionine</name>
        <dbReference type="ChEBI" id="CHEBI:59789"/>
    </ligand>
</feature>
<feature type="binding site" evidence="1">
    <location>
        <begin position="222"/>
        <end position="224"/>
    </location>
    <ligand>
        <name>S-adenosyl-L-methionine</name>
        <dbReference type="ChEBI" id="CHEBI:59789"/>
    </ligand>
</feature>
<feature type="binding site" evidence="1">
    <location>
        <position position="301"/>
    </location>
    <ligand>
        <name>S-adenosyl-L-methionine</name>
        <dbReference type="ChEBI" id="CHEBI:59789"/>
    </ligand>
</feature>
<feature type="disulfide bond" description="(transient)" evidence="1">
    <location>
        <begin position="107"/>
        <end position="344"/>
    </location>
</feature>
<accession>A3QCF9</accession>